<evidence type="ECO:0000255" key="1">
    <source>
        <dbReference type="HAMAP-Rule" id="MF_01843"/>
    </source>
</evidence>
<name>THF1_RIPO1</name>
<reference key="1">
    <citation type="journal article" date="2011" name="MBio">
        <title>Novel metabolic attributes of the genus Cyanothece, comprising a group of unicellular nitrogen-fixing Cyanobacteria.</title>
        <authorList>
            <person name="Bandyopadhyay A."/>
            <person name="Elvitigala T."/>
            <person name="Welsh E."/>
            <person name="Stockel J."/>
            <person name="Liberton M."/>
            <person name="Min H."/>
            <person name="Sherman L.A."/>
            <person name="Pakrasi H.B."/>
        </authorList>
    </citation>
    <scope>NUCLEOTIDE SEQUENCE [LARGE SCALE GENOMIC DNA]</scope>
    <source>
        <strain>PCC 8801 / RF-1</strain>
    </source>
</reference>
<comment type="function">
    <text evidence="1">May be involved in photosynthetic membrane biogenesis.</text>
</comment>
<comment type="similarity">
    <text evidence="1">Belongs to the THF1 family.</text>
</comment>
<feature type="chain" id="PRO_1000188426" description="Protein Thf1">
    <location>
        <begin position="1"/>
        <end position="235"/>
    </location>
</feature>
<feature type="coiled-coil region" evidence="1">
    <location>
        <begin position="179"/>
        <end position="228"/>
    </location>
</feature>
<organism>
    <name type="scientific">Rippkaea orientalis (strain PCC 8801 / RF-1)</name>
    <name type="common">Cyanothece sp. (strain PCC 8801)</name>
    <dbReference type="NCBI Taxonomy" id="41431"/>
    <lineage>
        <taxon>Bacteria</taxon>
        <taxon>Bacillati</taxon>
        <taxon>Cyanobacteriota</taxon>
        <taxon>Cyanophyceae</taxon>
        <taxon>Oscillatoriophycideae</taxon>
        <taxon>Chroococcales</taxon>
        <taxon>Aphanothecaceae</taxon>
        <taxon>Rippkaea</taxon>
        <taxon>Rippkaea orientalis</taxon>
    </lineage>
</organism>
<keyword id="KW-0175">Coiled coil</keyword>
<keyword id="KW-1185">Reference proteome</keyword>
<gene>
    <name evidence="1" type="primary">thf1</name>
    <name type="ordered locus">PCC8801_1143</name>
</gene>
<accession>B7K277</accession>
<sequence length="235" mass="26803">MDKIRTVSDTKRDFYNHHTRPINSIYRRFIEELLVEMHLLCVNIDFRYDPIYALGVVASFQQFMQGYRPEEDKNSIFSALCQAVGGDGEKYRHEAQTLLNQVKGMSVSDLIAMGNSARTGEPGEGMLYNTLQAIAKNPQFKYSRLFAIGLYTMVMEIDADLLKEQDKRNETFSQLCNGLNLSSDKLQKDLDLYRSNVDKMGQLLAVIEDALEAERKKREKAKQEVATTPEDSPAN</sequence>
<proteinExistence type="inferred from homology"/>
<dbReference type="EMBL" id="CP001287">
    <property type="protein sequence ID" value="ACK65213.1"/>
    <property type="molecule type" value="Genomic_DNA"/>
</dbReference>
<dbReference type="RefSeq" id="WP_012594487.1">
    <property type="nucleotide sequence ID" value="NC_011726.1"/>
</dbReference>
<dbReference type="SMR" id="B7K277"/>
<dbReference type="STRING" id="41431.PCC8801_1143"/>
<dbReference type="KEGG" id="cyp:PCC8801_1143"/>
<dbReference type="eggNOG" id="ENOG502Z86M">
    <property type="taxonomic scope" value="Bacteria"/>
</dbReference>
<dbReference type="HOGENOM" id="CLU_079763_1_0_3"/>
<dbReference type="OrthoDB" id="463078at2"/>
<dbReference type="Proteomes" id="UP000008204">
    <property type="component" value="Chromosome"/>
</dbReference>
<dbReference type="GO" id="GO:0030096">
    <property type="term" value="C:plasma membrane-derived thylakoid photosystem II"/>
    <property type="evidence" value="ECO:0007669"/>
    <property type="project" value="TreeGrafter"/>
</dbReference>
<dbReference type="GO" id="GO:0010207">
    <property type="term" value="P:photosystem II assembly"/>
    <property type="evidence" value="ECO:0007669"/>
    <property type="project" value="InterPro"/>
</dbReference>
<dbReference type="HAMAP" id="MF_01843">
    <property type="entry name" value="Thf1"/>
    <property type="match status" value="1"/>
</dbReference>
<dbReference type="InterPro" id="IPR017499">
    <property type="entry name" value="Thf1"/>
</dbReference>
<dbReference type="NCBIfam" id="TIGR03060">
    <property type="entry name" value="PS_II_psb29"/>
    <property type="match status" value="1"/>
</dbReference>
<dbReference type="PANTHER" id="PTHR34793">
    <property type="entry name" value="PROTEIN THYLAKOID FORMATION 1, CHLOROPLASTIC"/>
    <property type="match status" value="1"/>
</dbReference>
<dbReference type="PANTHER" id="PTHR34793:SF1">
    <property type="entry name" value="PROTEIN THYLAKOID FORMATION 1, CHLOROPLASTIC"/>
    <property type="match status" value="1"/>
</dbReference>
<dbReference type="Pfam" id="PF11264">
    <property type="entry name" value="ThylakoidFormat"/>
    <property type="match status" value="1"/>
</dbReference>
<protein>
    <recommendedName>
        <fullName evidence="1">Protein Thf1</fullName>
    </recommendedName>
</protein>